<feature type="chain" id="PRO_0000084789" description="Pachytene checkpoint protein 2">
    <location>
        <begin position="1"/>
        <end position="564"/>
    </location>
</feature>
<feature type="binding site" evidence="1">
    <location>
        <begin position="314"/>
        <end position="321"/>
    </location>
    <ligand>
        <name>ATP</name>
        <dbReference type="ChEBI" id="CHEBI:30616"/>
    </ligand>
</feature>
<accession>P38126</accession>
<accession>D6VQI1</accession>
<name>PCH2_YEAST</name>
<dbReference type="EMBL" id="U02073">
    <property type="protein sequence ID" value="AAB60280.1"/>
    <property type="status" value="ALT_SEQ"/>
    <property type="molecule type" value="Genomic_DNA"/>
</dbReference>
<dbReference type="EMBL" id="Z36055">
    <property type="protein sequence ID" value="CAA85147.1"/>
    <property type="status" value="ALT_SEQ"/>
    <property type="molecule type" value="Genomic_DNA"/>
</dbReference>
<dbReference type="EMBL" id="BK006936">
    <property type="protein sequence ID" value="DAA07301.1"/>
    <property type="molecule type" value="Genomic_DNA"/>
</dbReference>
<dbReference type="PIR" id="S46058">
    <property type="entry name" value="S46058"/>
</dbReference>
<dbReference type="RefSeq" id="NP_009745.2">
    <property type="nucleotide sequence ID" value="NM_001178534.1"/>
</dbReference>
<dbReference type="SMR" id="P38126"/>
<dbReference type="BioGRID" id="32884">
    <property type="interactions" value="78"/>
</dbReference>
<dbReference type="DIP" id="DIP-4661N"/>
<dbReference type="FunCoup" id="P38126">
    <property type="interactions" value="773"/>
</dbReference>
<dbReference type="IntAct" id="P38126">
    <property type="interactions" value="4"/>
</dbReference>
<dbReference type="MINT" id="P38126"/>
<dbReference type="STRING" id="4932.YBR186W"/>
<dbReference type="iPTMnet" id="P38126"/>
<dbReference type="PaxDb" id="4932-YBR186W"/>
<dbReference type="PeptideAtlas" id="P38126"/>
<dbReference type="EnsemblFungi" id="YBR186W_mRNA">
    <property type="protein sequence ID" value="YBR186W"/>
    <property type="gene ID" value="YBR186W"/>
</dbReference>
<dbReference type="GeneID" id="852484"/>
<dbReference type="KEGG" id="sce:YBR186W"/>
<dbReference type="AGR" id="SGD:S000000390"/>
<dbReference type="SGD" id="S000000390">
    <property type="gene designation" value="PCH2"/>
</dbReference>
<dbReference type="VEuPathDB" id="FungiDB:YBR186W"/>
<dbReference type="eggNOG" id="KOG0744">
    <property type="taxonomic scope" value="Eukaryota"/>
</dbReference>
<dbReference type="GeneTree" id="ENSGT00940000170021"/>
<dbReference type="HOGENOM" id="CLU_028208_3_0_1"/>
<dbReference type="InParanoid" id="P38126"/>
<dbReference type="OMA" id="VCIEEMI"/>
<dbReference type="OrthoDB" id="5925at2759"/>
<dbReference type="BioCyc" id="YEAST:G3O-29129-MONOMER"/>
<dbReference type="BioGRID-ORCS" id="852484">
    <property type="hits" value="0 hits in 10 CRISPR screens"/>
</dbReference>
<dbReference type="PRO" id="PR:P38126"/>
<dbReference type="Proteomes" id="UP000002311">
    <property type="component" value="Chromosome II"/>
</dbReference>
<dbReference type="RNAct" id="P38126">
    <property type="molecule type" value="protein"/>
</dbReference>
<dbReference type="GO" id="GO:0005694">
    <property type="term" value="C:chromosome"/>
    <property type="evidence" value="ECO:0000318"/>
    <property type="project" value="GO_Central"/>
</dbReference>
<dbReference type="GO" id="GO:0005730">
    <property type="term" value="C:nucleolus"/>
    <property type="evidence" value="ECO:0000314"/>
    <property type="project" value="SGD"/>
</dbReference>
<dbReference type="GO" id="GO:0005634">
    <property type="term" value="C:nucleus"/>
    <property type="evidence" value="ECO:0000318"/>
    <property type="project" value="GO_Central"/>
</dbReference>
<dbReference type="GO" id="GO:0005524">
    <property type="term" value="F:ATP binding"/>
    <property type="evidence" value="ECO:0007669"/>
    <property type="project" value="UniProtKB-KW"/>
</dbReference>
<dbReference type="GO" id="GO:0016887">
    <property type="term" value="F:ATP hydrolysis activity"/>
    <property type="evidence" value="ECO:0000314"/>
    <property type="project" value="SGD"/>
</dbReference>
<dbReference type="GO" id="GO:0042138">
    <property type="term" value="P:meiotic DNA double-strand break formation"/>
    <property type="evidence" value="ECO:0000315"/>
    <property type="project" value="SGD"/>
</dbReference>
<dbReference type="GO" id="GO:0051598">
    <property type="term" value="P:meiotic recombination checkpoint signaling"/>
    <property type="evidence" value="ECO:0000315"/>
    <property type="project" value="SGD"/>
</dbReference>
<dbReference type="GO" id="GO:0007131">
    <property type="term" value="P:reciprocal meiotic recombination"/>
    <property type="evidence" value="ECO:0000315"/>
    <property type="project" value="SGD"/>
</dbReference>
<dbReference type="FunFam" id="3.40.50.300:FF:001494">
    <property type="entry name" value="Pachytene checkpoint component Pch2"/>
    <property type="match status" value="1"/>
</dbReference>
<dbReference type="Gene3D" id="3.40.50.300">
    <property type="entry name" value="P-loop containing nucleotide triphosphate hydrolases"/>
    <property type="match status" value="1"/>
</dbReference>
<dbReference type="InterPro" id="IPR003593">
    <property type="entry name" value="AAA+_ATPase"/>
</dbReference>
<dbReference type="InterPro" id="IPR003959">
    <property type="entry name" value="ATPase_AAA_core"/>
</dbReference>
<dbReference type="InterPro" id="IPR027417">
    <property type="entry name" value="P-loop_NTPase"/>
</dbReference>
<dbReference type="InterPro" id="IPR044539">
    <property type="entry name" value="Pch2-like"/>
</dbReference>
<dbReference type="PANTHER" id="PTHR45991">
    <property type="entry name" value="PACHYTENE CHECKPOINT PROTEIN 2"/>
    <property type="match status" value="1"/>
</dbReference>
<dbReference type="PANTHER" id="PTHR45991:SF1">
    <property type="entry name" value="PACHYTENE CHECKPOINT PROTEIN 2 HOMOLOG"/>
    <property type="match status" value="1"/>
</dbReference>
<dbReference type="Pfam" id="PF00004">
    <property type="entry name" value="AAA"/>
    <property type="match status" value="1"/>
</dbReference>
<dbReference type="SMART" id="SM00382">
    <property type="entry name" value="AAA"/>
    <property type="match status" value="1"/>
</dbReference>
<dbReference type="SUPFAM" id="SSF52540">
    <property type="entry name" value="P-loop containing nucleoside triphosphate hydrolases"/>
    <property type="match status" value="2"/>
</dbReference>
<reference key="1">
    <citation type="journal article" date="1994" name="Yeast">
        <title>A 12.5 kb fragment of the yeast chromosome II contains two adjacent genes encoding ribosomal proteins and six putative new genes, one of which encodes a putative transcriptional factor.</title>
        <authorList>
            <person name="Demolis N."/>
            <person name="Jacquet M."/>
            <person name="Mallet L."/>
        </authorList>
    </citation>
    <scope>NUCLEOTIDE SEQUENCE [GENOMIC DNA]</scope>
    <source>
        <strain>ATCC 204508 / S288c</strain>
    </source>
</reference>
<reference key="2">
    <citation type="journal article" date="1994" name="EMBO J.">
        <title>Complete DNA sequence of yeast chromosome II.</title>
        <authorList>
            <person name="Feldmann H."/>
            <person name="Aigle M."/>
            <person name="Aljinovic G."/>
            <person name="Andre B."/>
            <person name="Baclet M.C."/>
            <person name="Barthe C."/>
            <person name="Baur A."/>
            <person name="Becam A.-M."/>
            <person name="Biteau N."/>
            <person name="Boles E."/>
            <person name="Brandt T."/>
            <person name="Brendel M."/>
            <person name="Brueckner M."/>
            <person name="Bussereau F."/>
            <person name="Christiansen C."/>
            <person name="Contreras R."/>
            <person name="Crouzet M."/>
            <person name="Cziepluch C."/>
            <person name="Demolis N."/>
            <person name="Delaveau T."/>
            <person name="Doignon F."/>
            <person name="Domdey H."/>
            <person name="Duesterhus S."/>
            <person name="Dubois E."/>
            <person name="Dujon B."/>
            <person name="El Bakkoury M."/>
            <person name="Entian K.-D."/>
            <person name="Feuermann M."/>
            <person name="Fiers W."/>
            <person name="Fobo G.M."/>
            <person name="Fritz C."/>
            <person name="Gassenhuber J."/>
            <person name="Glansdorff N."/>
            <person name="Goffeau A."/>
            <person name="Grivell L.A."/>
            <person name="de Haan M."/>
            <person name="Hein C."/>
            <person name="Herbert C.J."/>
            <person name="Hollenberg C.P."/>
            <person name="Holmstroem K."/>
            <person name="Jacq C."/>
            <person name="Jacquet M."/>
            <person name="Jauniaux J.-C."/>
            <person name="Jonniaux J.-L."/>
            <person name="Kallesoee T."/>
            <person name="Kiesau P."/>
            <person name="Kirchrath L."/>
            <person name="Koetter P."/>
            <person name="Korol S."/>
            <person name="Liebl S."/>
            <person name="Logghe M."/>
            <person name="Lohan A.J.E."/>
            <person name="Louis E.J."/>
            <person name="Li Z.Y."/>
            <person name="Maat M.J."/>
            <person name="Mallet L."/>
            <person name="Mannhaupt G."/>
            <person name="Messenguy F."/>
            <person name="Miosga T."/>
            <person name="Molemans F."/>
            <person name="Mueller S."/>
            <person name="Nasr F."/>
            <person name="Obermaier B."/>
            <person name="Perea J."/>
            <person name="Pierard A."/>
            <person name="Piravandi E."/>
            <person name="Pohl F.M."/>
            <person name="Pohl T.M."/>
            <person name="Potier S."/>
            <person name="Proft M."/>
            <person name="Purnelle B."/>
            <person name="Ramezani Rad M."/>
            <person name="Rieger M."/>
            <person name="Rose M."/>
            <person name="Schaaff-Gerstenschlaeger I."/>
            <person name="Scherens B."/>
            <person name="Schwarzlose C."/>
            <person name="Skala J."/>
            <person name="Slonimski P.P."/>
            <person name="Smits P.H.M."/>
            <person name="Souciet J.-L."/>
            <person name="Steensma H.Y."/>
            <person name="Stucka R."/>
            <person name="Urrestarazu L.A."/>
            <person name="van der Aart Q.J.M."/>
            <person name="Van Dyck L."/>
            <person name="Vassarotti A."/>
            <person name="Vetter I."/>
            <person name="Vierendeels F."/>
            <person name="Vissers S."/>
            <person name="Wagner G."/>
            <person name="de Wergifosse P."/>
            <person name="Wolfe K.H."/>
            <person name="Zagulski M."/>
            <person name="Zimmermann F.K."/>
            <person name="Mewes H.-W."/>
            <person name="Kleine K."/>
        </authorList>
    </citation>
    <scope>NUCLEOTIDE SEQUENCE [LARGE SCALE GENOMIC DNA]</scope>
    <source>
        <strain>ATCC 204508 / S288c</strain>
    </source>
</reference>
<reference key="3">
    <citation type="journal article" date="2014" name="G3 (Bethesda)">
        <title>The reference genome sequence of Saccharomyces cerevisiae: Then and now.</title>
        <authorList>
            <person name="Engel S.R."/>
            <person name="Dietrich F.S."/>
            <person name="Fisk D.G."/>
            <person name="Binkley G."/>
            <person name="Balakrishnan R."/>
            <person name="Costanzo M.C."/>
            <person name="Dwight S.S."/>
            <person name="Hitz B.C."/>
            <person name="Karra K."/>
            <person name="Nash R.S."/>
            <person name="Weng S."/>
            <person name="Wong E.D."/>
            <person name="Lloyd P."/>
            <person name="Skrzypek M.S."/>
            <person name="Miyasato S.R."/>
            <person name="Simison M."/>
            <person name="Cherry J.M."/>
        </authorList>
    </citation>
    <scope>GENOME REANNOTATION</scope>
    <source>
        <strain>ATCC 204508 / S288c</strain>
    </source>
</reference>
<reference key="4">
    <citation type="journal article" date="1999" name="Cell">
        <title>Pch2 links chromatin silencing to meiotic checkpoint control.</title>
        <authorList>
            <person name="San-Segundo P.A."/>
            <person name="Roeder G.S."/>
        </authorList>
    </citation>
    <scope>FUNCTION</scope>
    <scope>SUBCELLULAR LOCATION</scope>
    <scope>INDUCTION</scope>
</reference>
<reference key="5">
    <citation type="journal article" date="2000" name="Nucleic Acids Res.">
        <title>Test of intron predictions reveals novel splice sites, alternatively spliced mRNAs and new introns in meiotically regulated genes of yeast.</title>
        <authorList>
            <person name="Davis C.A."/>
            <person name="Grate L."/>
            <person name="Spingola M."/>
            <person name="Ares M. Jr."/>
        </authorList>
    </citation>
    <scope>REVISION OF GENE MODEL</scope>
</reference>
<reference key="6">
    <citation type="journal article" date="2001" name="Biochemistry">
        <title>Yeast mitochondrial dehydrogenases are associated in a supramolecular complex.</title>
        <authorList>
            <person name="Grandier-Vazeille X."/>
            <person name="Bathany K."/>
            <person name="Chaignepain S."/>
            <person name="Camougrand N."/>
            <person name="Manon S."/>
            <person name="Schmitter J.-M."/>
        </authorList>
    </citation>
    <scope>IDENTIFICATION BY MASS SPECTROMETRY</scope>
</reference>
<evidence type="ECO:0000255" key="1"/>
<evidence type="ECO:0000269" key="2">
    <source>
    </source>
</evidence>
<evidence type="ECO:0000305" key="3"/>
<protein>
    <recommendedName>
        <fullName>Pachytene checkpoint protein 2</fullName>
    </recommendedName>
</protein>
<organism>
    <name type="scientific">Saccharomyces cerevisiae (strain ATCC 204508 / S288c)</name>
    <name type="common">Baker's yeast</name>
    <dbReference type="NCBI Taxonomy" id="559292"/>
    <lineage>
        <taxon>Eukaryota</taxon>
        <taxon>Fungi</taxon>
        <taxon>Dikarya</taxon>
        <taxon>Ascomycota</taxon>
        <taxon>Saccharomycotina</taxon>
        <taxon>Saccharomycetes</taxon>
        <taxon>Saccharomycetales</taxon>
        <taxon>Saccharomycetaceae</taxon>
        <taxon>Saccharomyces</taxon>
    </lineage>
</organism>
<keyword id="KW-0067">ATP-binding</keyword>
<keyword id="KW-0158">Chromosome</keyword>
<keyword id="KW-0469">Meiosis</keyword>
<keyword id="KW-0547">Nucleotide-binding</keyword>
<keyword id="KW-0539">Nucleus</keyword>
<keyword id="KW-1185">Reference proteome</keyword>
<proteinExistence type="evidence at protein level"/>
<comment type="function">
    <text evidence="2">Required for the pachytene checkpoint, the meiotic checkpoint that prevents chromosome segregation when defects in recombination and synaptonemal complex formation occurred. Represses meiotic recombination in the rDNA, probably by excluding the meiosis-specific protein HOP1 from the nucleolar region.</text>
</comment>
<comment type="subcellular location">
    <subcellularLocation>
        <location evidence="2">Nucleus</location>
        <location evidence="2">Nucleolus</location>
    </subcellularLocation>
    <subcellularLocation>
        <location evidence="2">Chromosome</location>
    </subcellularLocation>
    <text>The majority of the protein localizes to the nucleolar region containing the ribosomal RNA genes (rDNA), a tandem array of 100-150 repeats on chromosome XII. Localization is SIR2-dependent.</text>
</comment>
<comment type="induction">
    <text evidence="2">Induced at the onset of meiosis I and reaches a maximum level during pachytene (at protein level).</text>
</comment>
<comment type="similarity">
    <text evidence="3">Belongs to the AAA ATPase family. PCH2 subfamily.</text>
</comment>
<comment type="sequence caution" evidence="3">
    <conflict type="erroneous gene model prediction">
        <sequence resource="EMBL-CDS" id="AAB60280"/>
    </conflict>
</comment>
<comment type="sequence caution" evidence="3">
    <conflict type="erroneous gene model prediction">
        <sequence resource="EMBL-CDS" id="CAA85147"/>
    </conflict>
</comment>
<gene>
    <name type="primary">PCH2</name>
    <name type="ordered locus">YBR186W</name>
    <name type="ORF">YBR1308</name>
</gene>
<sequence>MSYIVDLQVRGSSLRVIKCMFREDEQISSLHSGSDSKQNSNKKLGEFLNLLKAVVKRKLESFPKDRLKTSIITGQELMREGQGSIEIKDPPTEAQQHLIRSLAKVLLHQFSSINGKVNTVNEGQDNLFLSLFVKKISIEQQSTSHVSIKLNFHEKINLGQHIDSILDSEETNESDTYHMGSVDEFIIYPFCCLEEQDELKNGSILSTEFDKIDLELDEDDGFEGETLNNCINSVGNFDIPLSKQTLNLVNISYLPGTTFEGQWESLYFGNNIKERLYSYATISLKIARFKQTGDSNQEDITTLITNNKLLLVHGPPGTGKTTLCKALCQKLSVRREFSDGSDTIDTNYKGIIIELSCARIFSKWFGESSKNISIVFKDIEELLKVNEGRGIFICLLIDEVEAIASSRTNLSSRNESTDGIRVVNTLLTQLDRLKKYHNFLALATSNLLDSLDDAFVDRADGVFYVGNPTAEGILHILKVCIEEMITSGIILFHARSTGVKFFNKYQDILRKIAIKCSTVDISGRTIRKLPLMCLSEYFRTFPVDDDEFVLALAMSARKLSAARK</sequence>